<evidence type="ECO:0000255" key="1">
    <source>
        <dbReference type="HAMAP-Rule" id="MF_00211"/>
    </source>
</evidence>
<evidence type="ECO:0000305" key="2"/>
<gene>
    <name evidence="1" type="primary">trpD</name>
    <name type="ordered locus">BRADO4109</name>
</gene>
<sequence>MDDLKSIIGKVATGAPLSREQAASAFDSMMSGEATPSQMGALLMALRVRGETVEEITGAVSVMRAKMLRVDAPANAVDIVGTGGDGSGSVNVSTCASFIVAGAGVPVAKHGNRALSSRSGAADVLAALGVKIDLKPDQVGRCIREAGIGFMFAPAHHPAMKNVGPTRVELATRTIFNLLGPLSNPAGVKRQMVGVFSRQWVEPLAQVLKNLGSGAAWVVHGSDGLDEITLTGPTFVAALENGHIRTFEISPEEAGLGLCDSEGLKGGDAAANAVALQSVLDGLPSPYRDVALLNAAAALVVAGRAKSLKEGVAIGKDSLDSGAAAGRLKQLIAVSNS</sequence>
<feature type="chain" id="PRO_0000325414" description="Anthranilate phosphoribosyltransferase">
    <location>
        <begin position="1"/>
        <end position="337"/>
    </location>
</feature>
<feature type="binding site" evidence="1">
    <location>
        <position position="81"/>
    </location>
    <ligand>
        <name>5-phospho-alpha-D-ribose 1-diphosphate</name>
        <dbReference type="ChEBI" id="CHEBI:58017"/>
    </ligand>
</feature>
<feature type="binding site" evidence="1">
    <location>
        <position position="81"/>
    </location>
    <ligand>
        <name>anthranilate</name>
        <dbReference type="ChEBI" id="CHEBI:16567"/>
        <label>1</label>
    </ligand>
</feature>
<feature type="binding site" evidence="1">
    <location>
        <begin position="84"/>
        <end position="85"/>
    </location>
    <ligand>
        <name>5-phospho-alpha-D-ribose 1-diphosphate</name>
        <dbReference type="ChEBI" id="CHEBI:58017"/>
    </ligand>
</feature>
<feature type="binding site" evidence="1">
    <location>
        <position position="89"/>
    </location>
    <ligand>
        <name>5-phospho-alpha-D-ribose 1-diphosphate</name>
        <dbReference type="ChEBI" id="CHEBI:58017"/>
    </ligand>
</feature>
<feature type="binding site" evidence="1">
    <location>
        <begin position="91"/>
        <end position="94"/>
    </location>
    <ligand>
        <name>5-phospho-alpha-D-ribose 1-diphosphate</name>
        <dbReference type="ChEBI" id="CHEBI:58017"/>
    </ligand>
</feature>
<feature type="binding site" evidence="1">
    <location>
        <position position="93"/>
    </location>
    <ligand>
        <name>Mg(2+)</name>
        <dbReference type="ChEBI" id="CHEBI:18420"/>
        <label>1</label>
    </ligand>
</feature>
<feature type="binding site" evidence="1">
    <location>
        <begin position="109"/>
        <end position="117"/>
    </location>
    <ligand>
        <name>5-phospho-alpha-D-ribose 1-diphosphate</name>
        <dbReference type="ChEBI" id="CHEBI:58017"/>
    </ligand>
</feature>
<feature type="binding site" evidence="1">
    <location>
        <position position="112"/>
    </location>
    <ligand>
        <name>anthranilate</name>
        <dbReference type="ChEBI" id="CHEBI:16567"/>
        <label>1</label>
    </ligand>
</feature>
<feature type="binding site" evidence="1">
    <location>
        <position position="121"/>
    </location>
    <ligand>
        <name>5-phospho-alpha-D-ribose 1-diphosphate</name>
        <dbReference type="ChEBI" id="CHEBI:58017"/>
    </ligand>
</feature>
<feature type="binding site" evidence="1">
    <location>
        <position position="167"/>
    </location>
    <ligand>
        <name>anthranilate</name>
        <dbReference type="ChEBI" id="CHEBI:16567"/>
        <label>2</label>
    </ligand>
</feature>
<feature type="binding site" evidence="1">
    <location>
        <position position="226"/>
    </location>
    <ligand>
        <name>Mg(2+)</name>
        <dbReference type="ChEBI" id="CHEBI:18420"/>
        <label>2</label>
    </ligand>
</feature>
<feature type="binding site" evidence="1">
    <location>
        <position position="227"/>
    </location>
    <ligand>
        <name>Mg(2+)</name>
        <dbReference type="ChEBI" id="CHEBI:18420"/>
        <label>1</label>
    </ligand>
</feature>
<feature type="binding site" evidence="1">
    <location>
        <position position="227"/>
    </location>
    <ligand>
        <name>Mg(2+)</name>
        <dbReference type="ChEBI" id="CHEBI:18420"/>
        <label>2</label>
    </ligand>
</feature>
<keyword id="KW-0028">Amino-acid biosynthesis</keyword>
<keyword id="KW-0057">Aromatic amino acid biosynthesis</keyword>
<keyword id="KW-0328">Glycosyltransferase</keyword>
<keyword id="KW-0460">Magnesium</keyword>
<keyword id="KW-0479">Metal-binding</keyword>
<keyword id="KW-1185">Reference proteome</keyword>
<keyword id="KW-0808">Transferase</keyword>
<keyword id="KW-0822">Tryptophan biosynthesis</keyword>
<dbReference type="EC" id="2.4.2.18" evidence="1"/>
<dbReference type="EMBL" id="CU234118">
    <property type="protein sequence ID" value="CAL77861.1"/>
    <property type="status" value="ALT_INIT"/>
    <property type="molecule type" value="Genomic_DNA"/>
</dbReference>
<dbReference type="RefSeq" id="WP_041756722.1">
    <property type="nucleotide sequence ID" value="NC_009445.1"/>
</dbReference>
<dbReference type="SMR" id="A4YVD5"/>
<dbReference type="STRING" id="114615.BRADO4109"/>
<dbReference type="KEGG" id="bra:BRADO4109"/>
<dbReference type="eggNOG" id="COG0547">
    <property type="taxonomic scope" value="Bacteria"/>
</dbReference>
<dbReference type="HOGENOM" id="CLU_034315_2_1_5"/>
<dbReference type="OrthoDB" id="9806430at2"/>
<dbReference type="UniPathway" id="UPA00035">
    <property type="reaction ID" value="UER00041"/>
</dbReference>
<dbReference type="Proteomes" id="UP000001994">
    <property type="component" value="Chromosome"/>
</dbReference>
<dbReference type="GO" id="GO:0005829">
    <property type="term" value="C:cytosol"/>
    <property type="evidence" value="ECO:0007669"/>
    <property type="project" value="TreeGrafter"/>
</dbReference>
<dbReference type="GO" id="GO:0004048">
    <property type="term" value="F:anthranilate phosphoribosyltransferase activity"/>
    <property type="evidence" value="ECO:0007669"/>
    <property type="project" value="UniProtKB-UniRule"/>
</dbReference>
<dbReference type="GO" id="GO:0000287">
    <property type="term" value="F:magnesium ion binding"/>
    <property type="evidence" value="ECO:0007669"/>
    <property type="project" value="UniProtKB-UniRule"/>
</dbReference>
<dbReference type="GO" id="GO:0000162">
    <property type="term" value="P:L-tryptophan biosynthetic process"/>
    <property type="evidence" value="ECO:0007669"/>
    <property type="project" value="UniProtKB-UniRule"/>
</dbReference>
<dbReference type="FunFam" id="3.40.1030.10:FF:000002">
    <property type="entry name" value="Anthranilate phosphoribosyltransferase"/>
    <property type="match status" value="1"/>
</dbReference>
<dbReference type="Gene3D" id="3.40.1030.10">
    <property type="entry name" value="Nucleoside phosphorylase/phosphoribosyltransferase catalytic domain"/>
    <property type="match status" value="1"/>
</dbReference>
<dbReference type="Gene3D" id="1.20.970.10">
    <property type="entry name" value="Transferase, Pyrimidine Nucleoside Phosphorylase, Chain C"/>
    <property type="match status" value="1"/>
</dbReference>
<dbReference type="HAMAP" id="MF_00211">
    <property type="entry name" value="TrpD"/>
    <property type="match status" value="1"/>
</dbReference>
<dbReference type="InterPro" id="IPR005940">
    <property type="entry name" value="Anthranilate_Pribosyl_Tfrase"/>
</dbReference>
<dbReference type="InterPro" id="IPR000312">
    <property type="entry name" value="Glycosyl_Trfase_fam3"/>
</dbReference>
<dbReference type="InterPro" id="IPR017459">
    <property type="entry name" value="Glycosyl_Trfase_fam3_N_dom"/>
</dbReference>
<dbReference type="InterPro" id="IPR036320">
    <property type="entry name" value="Glycosyl_Trfase_fam3_N_dom_sf"/>
</dbReference>
<dbReference type="InterPro" id="IPR035902">
    <property type="entry name" value="Nuc_phospho_transferase"/>
</dbReference>
<dbReference type="NCBIfam" id="TIGR01245">
    <property type="entry name" value="trpD"/>
    <property type="match status" value="1"/>
</dbReference>
<dbReference type="PANTHER" id="PTHR43285">
    <property type="entry name" value="ANTHRANILATE PHOSPHORIBOSYLTRANSFERASE"/>
    <property type="match status" value="1"/>
</dbReference>
<dbReference type="PANTHER" id="PTHR43285:SF2">
    <property type="entry name" value="ANTHRANILATE PHOSPHORIBOSYLTRANSFERASE"/>
    <property type="match status" value="1"/>
</dbReference>
<dbReference type="Pfam" id="PF02885">
    <property type="entry name" value="Glycos_trans_3N"/>
    <property type="match status" value="1"/>
</dbReference>
<dbReference type="Pfam" id="PF00591">
    <property type="entry name" value="Glycos_transf_3"/>
    <property type="match status" value="1"/>
</dbReference>
<dbReference type="SUPFAM" id="SSF52418">
    <property type="entry name" value="Nucleoside phosphorylase/phosphoribosyltransferase catalytic domain"/>
    <property type="match status" value="1"/>
</dbReference>
<dbReference type="SUPFAM" id="SSF47648">
    <property type="entry name" value="Nucleoside phosphorylase/phosphoribosyltransferase N-terminal domain"/>
    <property type="match status" value="1"/>
</dbReference>
<organism>
    <name type="scientific">Bradyrhizobium sp. (strain ORS 278)</name>
    <dbReference type="NCBI Taxonomy" id="114615"/>
    <lineage>
        <taxon>Bacteria</taxon>
        <taxon>Pseudomonadati</taxon>
        <taxon>Pseudomonadota</taxon>
        <taxon>Alphaproteobacteria</taxon>
        <taxon>Hyphomicrobiales</taxon>
        <taxon>Nitrobacteraceae</taxon>
        <taxon>Bradyrhizobium</taxon>
    </lineage>
</organism>
<reference key="1">
    <citation type="journal article" date="2007" name="Science">
        <title>Legumes symbioses: absence of nod genes in photosynthetic bradyrhizobia.</title>
        <authorList>
            <person name="Giraud E."/>
            <person name="Moulin L."/>
            <person name="Vallenet D."/>
            <person name="Barbe V."/>
            <person name="Cytryn E."/>
            <person name="Avarre J.-C."/>
            <person name="Jaubert M."/>
            <person name="Simon D."/>
            <person name="Cartieaux F."/>
            <person name="Prin Y."/>
            <person name="Bena G."/>
            <person name="Hannibal L."/>
            <person name="Fardoux J."/>
            <person name="Kojadinovic M."/>
            <person name="Vuillet L."/>
            <person name="Lajus A."/>
            <person name="Cruveiller S."/>
            <person name="Rouy Z."/>
            <person name="Mangenot S."/>
            <person name="Segurens B."/>
            <person name="Dossat C."/>
            <person name="Franck W.L."/>
            <person name="Chang W.-S."/>
            <person name="Saunders E."/>
            <person name="Bruce D."/>
            <person name="Richardson P."/>
            <person name="Normand P."/>
            <person name="Dreyfus B."/>
            <person name="Pignol D."/>
            <person name="Stacey G."/>
            <person name="Emerich D."/>
            <person name="Vermeglio A."/>
            <person name="Medigue C."/>
            <person name="Sadowsky M."/>
        </authorList>
    </citation>
    <scope>NUCLEOTIDE SEQUENCE [LARGE SCALE GENOMIC DNA]</scope>
    <source>
        <strain>ORS 278</strain>
    </source>
</reference>
<accession>A4YVD5</accession>
<comment type="function">
    <text evidence="1">Catalyzes the transfer of the phosphoribosyl group of 5-phosphorylribose-1-pyrophosphate (PRPP) to anthranilate to yield N-(5'-phosphoribosyl)-anthranilate (PRA).</text>
</comment>
<comment type="catalytic activity">
    <reaction evidence="1">
        <text>N-(5-phospho-beta-D-ribosyl)anthranilate + diphosphate = 5-phospho-alpha-D-ribose 1-diphosphate + anthranilate</text>
        <dbReference type="Rhea" id="RHEA:11768"/>
        <dbReference type="ChEBI" id="CHEBI:16567"/>
        <dbReference type="ChEBI" id="CHEBI:18277"/>
        <dbReference type="ChEBI" id="CHEBI:33019"/>
        <dbReference type="ChEBI" id="CHEBI:58017"/>
        <dbReference type="EC" id="2.4.2.18"/>
    </reaction>
</comment>
<comment type="cofactor">
    <cofactor evidence="1">
        <name>Mg(2+)</name>
        <dbReference type="ChEBI" id="CHEBI:18420"/>
    </cofactor>
    <text evidence="1">Binds 2 magnesium ions per monomer.</text>
</comment>
<comment type="pathway">
    <text evidence="1">Amino-acid biosynthesis; L-tryptophan biosynthesis; L-tryptophan from chorismate: step 2/5.</text>
</comment>
<comment type="subunit">
    <text evidence="1">Homodimer.</text>
</comment>
<comment type="similarity">
    <text evidence="1">Belongs to the anthranilate phosphoribosyltransferase family.</text>
</comment>
<comment type="sequence caution" evidence="2">
    <conflict type="erroneous initiation">
        <sequence resource="EMBL-CDS" id="CAL77861"/>
    </conflict>
    <text>Extended N-terminus.</text>
</comment>
<proteinExistence type="inferred from homology"/>
<name>TRPD_BRASO</name>
<protein>
    <recommendedName>
        <fullName evidence="1">Anthranilate phosphoribosyltransferase</fullName>
        <ecNumber evidence="1">2.4.2.18</ecNumber>
    </recommendedName>
</protein>